<reference key="1">
    <citation type="submission" date="2003-06" db="EMBL/GenBank/DDBJ databases">
        <authorList>
            <consortium name="NIH - Xenopus Gene Collection (XGC) project"/>
        </authorList>
    </citation>
    <scope>NUCLEOTIDE SEQUENCE [LARGE SCALE MRNA]</scope>
</reference>
<accession>Q7SZ07</accession>
<name>CP52B_XENLA</name>
<organism>
    <name type="scientific">Xenopus laevis</name>
    <name type="common">African clawed frog</name>
    <dbReference type="NCBI Taxonomy" id="8355"/>
    <lineage>
        <taxon>Eukaryota</taxon>
        <taxon>Metazoa</taxon>
        <taxon>Chordata</taxon>
        <taxon>Craniata</taxon>
        <taxon>Vertebrata</taxon>
        <taxon>Euteleostomi</taxon>
        <taxon>Amphibia</taxon>
        <taxon>Batrachia</taxon>
        <taxon>Anura</taxon>
        <taxon>Pipoidea</taxon>
        <taxon>Pipidae</taxon>
        <taxon>Xenopodinae</taxon>
        <taxon>Xenopus</taxon>
        <taxon>Xenopus</taxon>
    </lineage>
</organism>
<keyword id="KW-1185">Reference proteome</keyword>
<proteinExistence type="evidence at transcript level"/>
<sequence length="167" mass="18250">MDKLTIISGCLFLAADIFAIASIANPDWINTGESAGALTVGLVRQCQTIHGRDRTCIPPRLPPEWVTTLFFIIMGIISLTVTCGLLVASHWRREATKYARWIAFTGMILFCMAALIFPIGFYINEVGGQPYKLPNNTVVGSSYVLFVLSIFFTIVGLLFAGKVCLPG</sequence>
<feature type="chain" id="PRO_0000271086" description="Uncharacterized protein C16orf52 homolog B">
    <location>
        <begin position="1"/>
        <end position="167"/>
    </location>
</feature>
<dbReference type="EMBL" id="BC054192">
    <property type="protein sequence ID" value="AAH54192.1"/>
    <property type="molecule type" value="mRNA"/>
</dbReference>
<dbReference type="RefSeq" id="NP_001079768.1">
    <property type="nucleotide sequence ID" value="NM_001086299.1"/>
</dbReference>
<dbReference type="SMR" id="Q7SZ07"/>
<dbReference type="DNASU" id="379458"/>
<dbReference type="GeneID" id="379458"/>
<dbReference type="KEGG" id="xla:379458"/>
<dbReference type="AGR" id="Xenbase:XB-GENE-5865835"/>
<dbReference type="CTD" id="379458"/>
<dbReference type="Xenbase" id="XB-GENE-5865835">
    <property type="gene designation" value="mosmo.L"/>
</dbReference>
<dbReference type="OMA" id="FIFKVCP"/>
<dbReference type="OrthoDB" id="8768722at2759"/>
<dbReference type="Proteomes" id="UP000186698">
    <property type="component" value="Chromosome 9_10L"/>
</dbReference>
<dbReference type="Bgee" id="379458">
    <property type="expression patterns" value="Expressed in blastula and 19 other cell types or tissues"/>
</dbReference>
<dbReference type="GO" id="GO:0060170">
    <property type="term" value="C:ciliary membrane"/>
    <property type="evidence" value="ECO:0000318"/>
    <property type="project" value="GO_Central"/>
</dbReference>
<dbReference type="GO" id="GO:0005794">
    <property type="term" value="C:Golgi apparatus"/>
    <property type="evidence" value="ECO:0000318"/>
    <property type="project" value="GO_Central"/>
</dbReference>
<dbReference type="GO" id="GO:0045879">
    <property type="term" value="P:negative regulation of smoothened signaling pathway"/>
    <property type="evidence" value="ECO:0000318"/>
    <property type="project" value="GO_Central"/>
</dbReference>
<dbReference type="FunFam" id="1.20.140.150:FF:000006">
    <property type="entry name" value="uncharacterized protein C16orf52 homolog"/>
    <property type="match status" value="1"/>
</dbReference>
<dbReference type="Gene3D" id="1.20.140.150">
    <property type="match status" value="1"/>
</dbReference>
<dbReference type="InterPro" id="IPR037663">
    <property type="entry name" value="Mosmo"/>
</dbReference>
<dbReference type="PANTHER" id="PTHR31186">
    <property type="entry name" value="MODULATOR OF SMOOTHENED PROTEIN"/>
    <property type="match status" value="1"/>
</dbReference>
<dbReference type="PANTHER" id="PTHR31186:SF1">
    <property type="entry name" value="MODULATOR OF SMOOTHENED PROTEIN"/>
    <property type="match status" value="1"/>
</dbReference>
<dbReference type="Pfam" id="PF18800">
    <property type="entry name" value="Atthog"/>
    <property type="match status" value="1"/>
</dbReference>
<protein>
    <recommendedName>
        <fullName>Uncharacterized protein C16orf52 homolog B</fullName>
    </recommendedName>
</protein>